<dbReference type="EMBL" id="U58488">
    <property type="protein sequence ID" value="AAB18384.2"/>
    <property type="molecule type" value="mRNA"/>
</dbReference>
<dbReference type="SMR" id="Q98960"/>
<dbReference type="GO" id="GO:0005576">
    <property type="term" value="C:extracellular region"/>
    <property type="evidence" value="ECO:0007669"/>
    <property type="project" value="UniProtKB-SubCell"/>
</dbReference>
<dbReference type="GO" id="GO:0016020">
    <property type="term" value="C:membrane"/>
    <property type="evidence" value="ECO:0007669"/>
    <property type="project" value="UniProtKB-KW"/>
</dbReference>
<dbReference type="GO" id="GO:0044218">
    <property type="term" value="C:other organism cell membrane"/>
    <property type="evidence" value="ECO:0007669"/>
    <property type="project" value="UniProtKB-KW"/>
</dbReference>
<dbReference type="GO" id="GO:0090729">
    <property type="term" value="F:toxin activity"/>
    <property type="evidence" value="ECO:0007669"/>
    <property type="project" value="UniProtKB-KW"/>
</dbReference>
<dbReference type="GO" id="GO:0031640">
    <property type="term" value="P:killing of cells of another organism"/>
    <property type="evidence" value="ECO:0007669"/>
    <property type="project" value="UniProtKB-KW"/>
</dbReference>
<dbReference type="CDD" id="cd00206">
    <property type="entry name" value="TFP_snake_toxin"/>
    <property type="match status" value="1"/>
</dbReference>
<dbReference type="FunFam" id="2.10.60.10:FF:000024">
    <property type="entry name" value="Cytotoxin 1"/>
    <property type="match status" value="1"/>
</dbReference>
<dbReference type="Gene3D" id="2.10.60.10">
    <property type="entry name" value="CD59"/>
    <property type="match status" value="1"/>
</dbReference>
<dbReference type="InterPro" id="IPR003572">
    <property type="entry name" value="Cytotoxin_Cobra"/>
</dbReference>
<dbReference type="InterPro" id="IPR003571">
    <property type="entry name" value="Snake_3FTx"/>
</dbReference>
<dbReference type="InterPro" id="IPR045860">
    <property type="entry name" value="Snake_toxin-like_sf"/>
</dbReference>
<dbReference type="InterPro" id="IPR018354">
    <property type="entry name" value="Snake_toxin_con_site"/>
</dbReference>
<dbReference type="InterPro" id="IPR054131">
    <property type="entry name" value="Toxin_cobra-type"/>
</dbReference>
<dbReference type="Pfam" id="PF21947">
    <property type="entry name" value="Toxin_cobra-type"/>
    <property type="match status" value="1"/>
</dbReference>
<dbReference type="PRINTS" id="PR00282">
    <property type="entry name" value="CYTOTOXIN"/>
</dbReference>
<dbReference type="SUPFAM" id="SSF57302">
    <property type="entry name" value="Snake toxin-like"/>
    <property type="match status" value="1"/>
</dbReference>
<dbReference type="PROSITE" id="PS00272">
    <property type="entry name" value="SNAKE_TOXIN"/>
    <property type="match status" value="1"/>
</dbReference>
<keyword id="KW-0123">Cardiotoxin</keyword>
<keyword id="KW-0204">Cytolysis</keyword>
<keyword id="KW-1015">Disulfide bond</keyword>
<keyword id="KW-0472">Membrane</keyword>
<keyword id="KW-0964">Secreted</keyword>
<keyword id="KW-0732">Signal</keyword>
<keyword id="KW-1052">Target cell membrane</keyword>
<keyword id="KW-1053">Target membrane</keyword>
<keyword id="KW-0800">Toxin</keyword>
<evidence type="ECO:0000250" key="1"/>
<evidence type="ECO:0000250" key="2">
    <source>
        <dbReference type="UniProtKB" id="P60301"/>
    </source>
</evidence>
<evidence type="ECO:0000250" key="3">
    <source>
        <dbReference type="UniProtKB" id="P60304"/>
    </source>
</evidence>
<evidence type="ECO:0000305" key="4"/>
<accession>Q98960</accession>
<proteinExistence type="inferred from homology"/>
<organism>
    <name type="scientific">Naja atra</name>
    <name type="common">Chinese cobra</name>
    <dbReference type="NCBI Taxonomy" id="8656"/>
    <lineage>
        <taxon>Eukaryota</taxon>
        <taxon>Metazoa</taxon>
        <taxon>Chordata</taxon>
        <taxon>Craniata</taxon>
        <taxon>Vertebrata</taxon>
        <taxon>Euteleostomi</taxon>
        <taxon>Lepidosauria</taxon>
        <taxon>Squamata</taxon>
        <taxon>Bifurcata</taxon>
        <taxon>Unidentata</taxon>
        <taxon>Episquamata</taxon>
        <taxon>Toxicofera</taxon>
        <taxon>Serpentes</taxon>
        <taxon>Colubroidea</taxon>
        <taxon>Elapidae</taxon>
        <taxon>Elapinae</taxon>
        <taxon>Naja</taxon>
    </lineage>
</organism>
<name>3SA3B_NAJAT</name>
<sequence>MKTLLLTLVVVTIVCLDLGYTLKCNKLVPLFYKTCPAGKNLCYKMFMVATPKVPVKRGCIDVCPKNSALVKYVCCNTDRCN</sequence>
<protein>
    <recommendedName>
        <fullName>Cytotoxin 3b</fullName>
    </recommendedName>
    <alternativeName>
        <fullName>Cardiotoxin 3b</fullName>
    </alternativeName>
</protein>
<reference key="1">
    <citation type="submission" date="2000-08" db="EMBL/GenBank/DDBJ databases">
        <authorList>
            <person name="Chu R.C."/>
            <person name="Yang C.-C."/>
        </authorList>
    </citation>
    <scope>NUCLEOTIDE SEQUENCE [MRNA]</scope>
    <source>
        <tissue>Venom gland</tissue>
    </source>
</reference>
<feature type="signal peptide" evidence="1">
    <location>
        <begin position="1"/>
        <end position="21"/>
    </location>
</feature>
<feature type="chain" id="PRO_0000035373" description="Cytotoxin 3b">
    <location>
        <begin position="22"/>
        <end position="81"/>
    </location>
</feature>
<feature type="disulfide bond" evidence="2">
    <location>
        <begin position="24"/>
        <end position="42"/>
    </location>
</feature>
<feature type="disulfide bond" evidence="2">
    <location>
        <begin position="35"/>
        <end position="59"/>
    </location>
</feature>
<feature type="disulfide bond" evidence="2">
    <location>
        <begin position="63"/>
        <end position="74"/>
    </location>
</feature>
<feature type="disulfide bond" evidence="2">
    <location>
        <begin position="75"/>
        <end position="80"/>
    </location>
</feature>
<comment type="function">
    <text evidence="2 3">Shows cytolytic activity on many different cells by forming pore in lipid membranes. In vivo, increases heart rate or kills the animal by cardiac arrest. In addition, it binds to heparin with high affinity, interacts with Kv channel-interacting protein 1 (KCNIP1) in a calcium-independent manner, and binds to integrin alpha-V/beta-3 (ITGAV/ITGB3) with moderate affinity.</text>
</comment>
<comment type="subunit">
    <text evidence="2">Monomer in solution; Homodimer and oligomer in the presence of negatively charged lipids forming a pore with a size ranging between 20 and 30 Angstroms.</text>
</comment>
<comment type="subcellular location">
    <subcellularLocation>
        <location evidence="1">Secreted</location>
    </subcellularLocation>
    <subcellularLocation>
        <location evidence="2">Target cell membrane</location>
    </subcellularLocation>
</comment>
<comment type="tissue specificity">
    <text evidence="4">Expressed by the venom gland.</text>
</comment>
<comment type="miscellaneous">
    <text evidence="4">Is classified as a P-type cytotoxin, since a proline residue stands at position 51 (Pro-31 in standard classification).</text>
</comment>
<comment type="similarity">
    <text evidence="4">Belongs to the three-finger toxin family. Short-chain subfamily. Type IA cytotoxin sub-subfamily.</text>
</comment>